<proteinExistence type="inferred from homology"/>
<accession>A4THK2</accession>
<name>DIAA_YERPP</name>
<protein>
    <recommendedName>
        <fullName evidence="1">DnaA initiator-associating protein DiaA</fullName>
    </recommendedName>
</protein>
<keyword id="KW-0235">DNA replication</keyword>
<gene>
    <name evidence="1" type="primary">diaA</name>
    <name type="ordered locus">YPDSF_0347</name>
</gene>
<evidence type="ECO:0000255" key="1">
    <source>
        <dbReference type="HAMAP-Rule" id="MF_01157"/>
    </source>
</evidence>
<comment type="function">
    <text evidence="1">Required for the timely initiation of chromosomal replication via direct interactions with the DnaA initiator protein.</text>
</comment>
<comment type="subunit">
    <text evidence="1">Homotetramer; dimer of dimers.</text>
</comment>
<comment type="similarity">
    <text evidence="1">Belongs to the SIS family. DiaA subfamily.</text>
</comment>
<feature type="chain" id="PRO_1000065557" description="DnaA initiator-associating protein DiaA">
    <location>
        <begin position="1"/>
        <end position="196"/>
    </location>
</feature>
<feature type="domain" description="SIS" evidence="1">
    <location>
        <begin position="34"/>
        <end position="196"/>
    </location>
</feature>
<dbReference type="EMBL" id="CP000668">
    <property type="protein sequence ID" value="ABP38764.1"/>
    <property type="molecule type" value="Genomic_DNA"/>
</dbReference>
<dbReference type="RefSeq" id="WP_002210146.1">
    <property type="nucleotide sequence ID" value="NZ_CP009715.1"/>
</dbReference>
<dbReference type="SMR" id="A4THK2"/>
<dbReference type="GeneID" id="57975165"/>
<dbReference type="KEGG" id="ypp:YPDSF_0347"/>
<dbReference type="PATRIC" id="fig|386656.14.peg.1648"/>
<dbReference type="GO" id="GO:0097367">
    <property type="term" value="F:carbohydrate derivative binding"/>
    <property type="evidence" value="ECO:0007669"/>
    <property type="project" value="InterPro"/>
</dbReference>
<dbReference type="GO" id="GO:1901135">
    <property type="term" value="P:carbohydrate derivative metabolic process"/>
    <property type="evidence" value="ECO:0007669"/>
    <property type="project" value="InterPro"/>
</dbReference>
<dbReference type="GO" id="GO:0006260">
    <property type="term" value="P:DNA replication"/>
    <property type="evidence" value="ECO:0007669"/>
    <property type="project" value="UniProtKB-UniRule"/>
</dbReference>
<dbReference type="CDD" id="cd05006">
    <property type="entry name" value="SIS_GmhA"/>
    <property type="match status" value="1"/>
</dbReference>
<dbReference type="FunFam" id="3.40.50.10490:FF:000006">
    <property type="entry name" value="DnaA initiator-associating protein DiaA"/>
    <property type="match status" value="1"/>
</dbReference>
<dbReference type="Gene3D" id="3.40.50.10490">
    <property type="entry name" value="Glucose-6-phosphate isomerase like protein, domain 1"/>
    <property type="match status" value="1"/>
</dbReference>
<dbReference type="HAMAP" id="MF_01157">
    <property type="entry name" value="SIS_DiaA"/>
    <property type="match status" value="1"/>
</dbReference>
<dbReference type="InterPro" id="IPR023070">
    <property type="entry name" value="DiaA"/>
</dbReference>
<dbReference type="InterPro" id="IPR035461">
    <property type="entry name" value="GmhA/DiaA"/>
</dbReference>
<dbReference type="InterPro" id="IPR001347">
    <property type="entry name" value="SIS_dom"/>
</dbReference>
<dbReference type="InterPro" id="IPR046348">
    <property type="entry name" value="SIS_dom_sf"/>
</dbReference>
<dbReference type="InterPro" id="IPR050099">
    <property type="entry name" value="SIS_GmhA/DiaA_subfam"/>
</dbReference>
<dbReference type="NCBIfam" id="NF008138">
    <property type="entry name" value="PRK10886.1"/>
    <property type="match status" value="1"/>
</dbReference>
<dbReference type="PANTHER" id="PTHR30390:SF6">
    <property type="entry name" value="DNAA INITIATOR-ASSOCIATING PROTEIN DIAA"/>
    <property type="match status" value="1"/>
</dbReference>
<dbReference type="PANTHER" id="PTHR30390">
    <property type="entry name" value="SEDOHEPTULOSE 7-PHOSPHATE ISOMERASE / DNAA INITIATOR-ASSOCIATING FACTOR FOR REPLICATION INITIATION"/>
    <property type="match status" value="1"/>
</dbReference>
<dbReference type="Pfam" id="PF13580">
    <property type="entry name" value="SIS_2"/>
    <property type="match status" value="1"/>
</dbReference>
<dbReference type="SUPFAM" id="SSF53697">
    <property type="entry name" value="SIS domain"/>
    <property type="match status" value="1"/>
</dbReference>
<dbReference type="PROSITE" id="PS51464">
    <property type="entry name" value="SIS"/>
    <property type="match status" value="1"/>
</dbReference>
<sequence length="196" mass="20938">MLERIKGCFTESIQTQIAAAEALPDAISCAAMALVQSLLNGNKILCCGNGTSAANAQHFAASMINRFETERPSLPAIALNADNVVLTAITNDRLHDEVYAKQVRALGQAGDVLLAISTRGNSRDIVKAVEAAVTRDMTIVALTGYDGGELAGLLGQLDVEIRIPSHRGARVQELHMLTVNCLCDLIDNTLFPHQND</sequence>
<organism>
    <name type="scientific">Yersinia pestis (strain Pestoides F)</name>
    <dbReference type="NCBI Taxonomy" id="386656"/>
    <lineage>
        <taxon>Bacteria</taxon>
        <taxon>Pseudomonadati</taxon>
        <taxon>Pseudomonadota</taxon>
        <taxon>Gammaproteobacteria</taxon>
        <taxon>Enterobacterales</taxon>
        <taxon>Yersiniaceae</taxon>
        <taxon>Yersinia</taxon>
    </lineage>
</organism>
<reference key="1">
    <citation type="submission" date="2007-02" db="EMBL/GenBank/DDBJ databases">
        <title>Complete sequence of chromosome of Yersinia pestis Pestoides F.</title>
        <authorList>
            <consortium name="US DOE Joint Genome Institute"/>
            <person name="Copeland A."/>
            <person name="Lucas S."/>
            <person name="Lapidus A."/>
            <person name="Barry K."/>
            <person name="Detter J.C."/>
            <person name="Glavina del Rio T."/>
            <person name="Hammon N."/>
            <person name="Israni S."/>
            <person name="Dalin E."/>
            <person name="Tice H."/>
            <person name="Pitluck S."/>
            <person name="Di Bartolo G."/>
            <person name="Chain P."/>
            <person name="Malfatti S."/>
            <person name="Shin M."/>
            <person name="Vergez L."/>
            <person name="Schmutz J."/>
            <person name="Larimer F."/>
            <person name="Land M."/>
            <person name="Hauser L."/>
            <person name="Worsham P."/>
            <person name="Chu M."/>
            <person name="Bearden S."/>
            <person name="Garcia E."/>
            <person name="Richardson P."/>
        </authorList>
    </citation>
    <scope>NUCLEOTIDE SEQUENCE [LARGE SCALE GENOMIC DNA]</scope>
    <source>
        <strain>Pestoides F</strain>
    </source>
</reference>